<sequence>MGSIIVERSKLSGEVEISGAKNSALPLLAAALLTEEEVTLYKVPVLSDVETMIDILRTTGKDVFFDKHKGIVKISGKISITHIQYELVRKMRASFNVLGPIAALVGEASTPLPGGCAIGARPVDFHLEGLKKIGFEISFDHGEIRAKRGKKEEESVVYLPFPSVGATEHIMSTAAILPGKTIIENAAMEPEIIDLQNLLNKMGAKVYGAGTSKIIVEGVEKLHGCEHTIIPDRIEAGTYIIGILATKGEGIVKNIIPEHLEALWFVLEKTGAIIKKGENEVEVKSPDKWYGCDINVLPYPGFPTDLQPQILVYLSLADGSSTVTENVFKTRFAHVAELVRMGANMKIIENTVFINGVEKLYGTTVMGTDLRATAALVIAGLAAEDRTEVTSVEHIFRGYENVIEKFSKLGASIKYIPGGVPEI</sequence>
<feature type="chain" id="PRO_1000117510" description="UDP-N-acetylglucosamine 1-carboxyvinyltransferase">
    <location>
        <begin position="1"/>
        <end position="423"/>
    </location>
</feature>
<feature type="active site" description="Proton donor" evidence="1">
    <location>
        <position position="116"/>
    </location>
</feature>
<feature type="binding site" evidence="1">
    <location>
        <begin position="21"/>
        <end position="22"/>
    </location>
    <ligand>
        <name>phosphoenolpyruvate</name>
        <dbReference type="ChEBI" id="CHEBI:58702"/>
    </ligand>
</feature>
<feature type="binding site" evidence="1">
    <location>
        <position position="92"/>
    </location>
    <ligand>
        <name>UDP-N-acetyl-alpha-D-glucosamine</name>
        <dbReference type="ChEBI" id="CHEBI:57705"/>
    </ligand>
</feature>
<feature type="binding site" evidence="1">
    <location>
        <position position="305"/>
    </location>
    <ligand>
        <name>UDP-N-acetyl-alpha-D-glucosamine</name>
        <dbReference type="ChEBI" id="CHEBI:57705"/>
    </ligand>
</feature>
<feature type="binding site" evidence="1">
    <location>
        <position position="327"/>
    </location>
    <ligand>
        <name>UDP-N-acetyl-alpha-D-glucosamine</name>
        <dbReference type="ChEBI" id="CHEBI:57705"/>
    </ligand>
</feature>
<feature type="modified residue" description="2-(S-cysteinyl)pyruvic acid O-phosphothioketal" evidence="1">
    <location>
        <position position="116"/>
    </location>
</feature>
<reference key="1">
    <citation type="submission" date="2007-07" db="EMBL/GenBank/DDBJ databases">
        <title>Complete sequence of Fervidobacterium nodosum Rt17-B1.</title>
        <authorList>
            <consortium name="US DOE Joint Genome Institute"/>
            <person name="Copeland A."/>
            <person name="Lucas S."/>
            <person name="Lapidus A."/>
            <person name="Barry K."/>
            <person name="Glavina del Rio T."/>
            <person name="Dalin E."/>
            <person name="Tice H."/>
            <person name="Pitluck S."/>
            <person name="Saunders E."/>
            <person name="Brettin T."/>
            <person name="Bruce D."/>
            <person name="Detter J.C."/>
            <person name="Han C."/>
            <person name="Schmutz J."/>
            <person name="Larimer F."/>
            <person name="Land M."/>
            <person name="Hauser L."/>
            <person name="Kyrpides N."/>
            <person name="Mikhailova N."/>
            <person name="Nelson K."/>
            <person name="Gogarten J.P."/>
            <person name="Noll K."/>
            <person name="Richardson P."/>
        </authorList>
    </citation>
    <scope>NUCLEOTIDE SEQUENCE [LARGE SCALE GENOMIC DNA]</scope>
    <source>
        <strain>ATCC 35602 / DSM 5306 / Rt17-B1</strain>
    </source>
</reference>
<dbReference type="EC" id="2.5.1.7" evidence="1"/>
<dbReference type="EMBL" id="CP000771">
    <property type="protein sequence ID" value="ABS61338.1"/>
    <property type="molecule type" value="Genomic_DNA"/>
</dbReference>
<dbReference type="RefSeq" id="WP_011994643.1">
    <property type="nucleotide sequence ID" value="NC_009718.1"/>
</dbReference>
<dbReference type="SMR" id="A7HN55"/>
<dbReference type="STRING" id="381764.Fnod_1495"/>
<dbReference type="KEGG" id="fno:Fnod_1495"/>
<dbReference type="eggNOG" id="COG0766">
    <property type="taxonomic scope" value="Bacteria"/>
</dbReference>
<dbReference type="HOGENOM" id="CLU_027387_0_0_0"/>
<dbReference type="OrthoDB" id="9803760at2"/>
<dbReference type="UniPathway" id="UPA00219"/>
<dbReference type="Proteomes" id="UP000002415">
    <property type="component" value="Chromosome"/>
</dbReference>
<dbReference type="GO" id="GO:0005737">
    <property type="term" value="C:cytoplasm"/>
    <property type="evidence" value="ECO:0007669"/>
    <property type="project" value="UniProtKB-SubCell"/>
</dbReference>
<dbReference type="GO" id="GO:0008760">
    <property type="term" value="F:UDP-N-acetylglucosamine 1-carboxyvinyltransferase activity"/>
    <property type="evidence" value="ECO:0007669"/>
    <property type="project" value="UniProtKB-UniRule"/>
</dbReference>
<dbReference type="GO" id="GO:0051301">
    <property type="term" value="P:cell division"/>
    <property type="evidence" value="ECO:0007669"/>
    <property type="project" value="UniProtKB-KW"/>
</dbReference>
<dbReference type="GO" id="GO:0071555">
    <property type="term" value="P:cell wall organization"/>
    <property type="evidence" value="ECO:0007669"/>
    <property type="project" value="UniProtKB-KW"/>
</dbReference>
<dbReference type="GO" id="GO:0009252">
    <property type="term" value="P:peptidoglycan biosynthetic process"/>
    <property type="evidence" value="ECO:0007669"/>
    <property type="project" value="UniProtKB-UniRule"/>
</dbReference>
<dbReference type="GO" id="GO:0008360">
    <property type="term" value="P:regulation of cell shape"/>
    <property type="evidence" value="ECO:0007669"/>
    <property type="project" value="UniProtKB-KW"/>
</dbReference>
<dbReference type="GO" id="GO:0019277">
    <property type="term" value="P:UDP-N-acetylgalactosamine biosynthetic process"/>
    <property type="evidence" value="ECO:0007669"/>
    <property type="project" value="InterPro"/>
</dbReference>
<dbReference type="CDD" id="cd01555">
    <property type="entry name" value="UdpNAET"/>
    <property type="match status" value="1"/>
</dbReference>
<dbReference type="Gene3D" id="3.65.10.10">
    <property type="entry name" value="Enolpyruvate transferase domain"/>
    <property type="match status" value="2"/>
</dbReference>
<dbReference type="HAMAP" id="MF_00111">
    <property type="entry name" value="MurA"/>
    <property type="match status" value="1"/>
</dbReference>
<dbReference type="InterPro" id="IPR001986">
    <property type="entry name" value="Enolpyruvate_Tfrase_dom"/>
</dbReference>
<dbReference type="InterPro" id="IPR036968">
    <property type="entry name" value="Enolpyruvate_Tfrase_sf"/>
</dbReference>
<dbReference type="InterPro" id="IPR050068">
    <property type="entry name" value="MurA_subfamily"/>
</dbReference>
<dbReference type="InterPro" id="IPR013792">
    <property type="entry name" value="RNA3'P_cycl/enolpyr_Trfase_a/b"/>
</dbReference>
<dbReference type="InterPro" id="IPR005750">
    <property type="entry name" value="UDP_GlcNAc_COvinyl_MurA"/>
</dbReference>
<dbReference type="NCBIfam" id="TIGR01072">
    <property type="entry name" value="murA"/>
    <property type="match status" value="1"/>
</dbReference>
<dbReference type="NCBIfam" id="NF006873">
    <property type="entry name" value="PRK09369.1"/>
    <property type="match status" value="1"/>
</dbReference>
<dbReference type="PANTHER" id="PTHR43783">
    <property type="entry name" value="UDP-N-ACETYLGLUCOSAMINE 1-CARBOXYVINYLTRANSFERASE"/>
    <property type="match status" value="1"/>
</dbReference>
<dbReference type="PANTHER" id="PTHR43783:SF1">
    <property type="entry name" value="UDP-N-ACETYLGLUCOSAMINE 1-CARBOXYVINYLTRANSFERASE"/>
    <property type="match status" value="1"/>
</dbReference>
<dbReference type="Pfam" id="PF00275">
    <property type="entry name" value="EPSP_synthase"/>
    <property type="match status" value="1"/>
</dbReference>
<dbReference type="SUPFAM" id="SSF55205">
    <property type="entry name" value="EPT/RTPC-like"/>
    <property type="match status" value="1"/>
</dbReference>
<protein>
    <recommendedName>
        <fullName evidence="1">UDP-N-acetylglucosamine 1-carboxyvinyltransferase</fullName>
        <ecNumber evidence="1">2.5.1.7</ecNumber>
    </recommendedName>
    <alternativeName>
        <fullName evidence="1">Enoylpyruvate transferase</fullName>
    </alternativeName>
    <alternativeName>
        <fullName evidence="1">UDP-N-acetylglucosamine enolpyruvyl transferase</fullName>
        <shortName evidence="1">EPT</shortName>
    </alternativeName>
</protein>
<gene>
    <name evidence="1" type="primary">murA</name>
    <name type="ordered locus">Fnod_1495</name>
</gene>
<organism>
    <name type="scientific">Fervidobacterium nodosum (strain ATCC 35602 / DSM 5306 / Rt17-B1)</name>
    <dbReference type="NCBI Taxonomy" id="381764"/>
    <lineage>
        <taxon>Bacteria</taxon>
        <taxon>Thermotogati</taxon>
        <taxon>Thermotogota</taxon>
        <taxon>Thermotogae</taxon>
        <taxon>Thermotogales</taxon>
        <taxon>Fervidobacteriaceae</taxon>
        <taxon>Fervidobacterium</taxon>
    </lineage>
</organism>
<accession>A7HN55</accession>
<comment type="function">
    <text evidence="1">Cell wall formation. Adds enolpyruvyl to UDP-N-acetylglucosamine.</text>
</comment>
<comment type="catalytic activity">
    <reaction evidence="1">
        <text>phosphoenolpyruvate + UDP-N-acetyl-alpha-D-glucosamine = UDP-N-acetyl-3-O-(1-carboxyvinyl)-alpha-D-glucosamine + phosphate</text>
        <dbReference type="Rhea" id="RHEA:18681"/>
        <dbReference type="ChEBI" id="CHEBI:43474"/>
        <dbReference type="ChEBI" id="CHEBI:57705"/>
        <dbReference type="ChEBI" id="CHEBI:58702"/>
        <dbReference type="ChEBI" id="CHEBI:68483"/>
        <dbReference type="EC" id="2.5.1.7"/>
    </reaction>
</comment>
<comment type="pathway">
    <text evidence="1">Cell wall biogenesis; peptidoglycan biosynthesis.</text>
</comment>
<comment type="subcellular location">
    <subcellularLocation>
        <location evidence="1">Cytoplasm</location>
    </subcellularLocation>
</comment>
<comment type="similarity">
    <text evidence="1">Belongs to the EPSP synthase family. MurA subfamily.</text>
</comment>
<name>MURA_FERNB</name>
<proteinExistence type="inferred from homology"/>
<keyword id="KW-0131">Cell cycle</keyword>
<keyword id="KW-0132">Cell division</keyword>
<keyword id="KW-0133">Cell shape</keyword>
<keyword id="KW-0961">Cell wall biogenesis/degradation</keyword>
<keyword id="KW-0963">Cytoplasm</keyword>
<keyword id="KW-0573">Peptidoglycan synthesis</keyword>
<keyword id="KW-0670">Pyruvate</keyword>
<keyword id="KW-1185">Reference proteome</keyword>
<keyword id="KW-0808">Transferase</keyword>
<evidence type="ECO:0000255" key="1">
    <source>
        <dbReference type="HAMAP-Rule" id="MF_00111"/>
    </source>
</evidence>